<accession>P31562</accession>
<accession>A7M977</accession>
<sequence>MERREGGRDNSSCSNVNQLFGVKDSESLLYDDVFIVRDRNGDSYFAYWDIEKNTFLSEPFYSYRSRNSSYLPKIKAFMSEDRSQIHEVKNGFRSEDHSKINKINGVENLFHNYNMNVLTDDYNFKMGMNGFHRPQSKIHINRFIDSYLQSQICIATTPGSGSDNDSYIHGSRVYGESESYTRSEGRSSSIRTRTKGVELTLRERPGILDRTKKYMYLWLQCDNCYGLNYKKVLKSKMTICEQCGYHLQMSSSDRIELLIDPGTWDPMDEDMVSRDPIKFDSGGGEAYKDRLYFYQRKTGLTEAVQTGIGQLNGIPVAIGVMDFKFMGGSMGSVVGEKITRLIEHATNKFLPLIIVSASGGARMQEGSLSLMQMAKISSALYDYQSNKRLVYVSILTSPTAGGVTASFGMLGDIIIVEPRAYVAFAGKRVIEQTLNQTIPNDSQEAEFLFHKGLFDLIIPRHLLKSVISELFTLHDLFPLNQNSNQYSQYRALLNPIF</sequence>
<keyword id="KW-0067">ATP-binding</keyword>
<keyword id="KW-0275">Fatty acid biosynthesis</keyword>
<keyword id="KW-0276">Fatty acid metabolism</keyword>
<keyword id="KW-0444">Lipid biosynthesis</keyword>
<keyword id="KW-0443">Lipid metabolism</keyword>
<keyword id="KW-0479">Metal-binding</keyword>
<keyword id="KW-0547">Nucleotide-binding</keyword>
<keyword id="KW-0934">Plastid</keyword>
<keyword id="KW-0691">RNA editing</keyword>
<keyword id="KW-0808">Transferase</keyword>
<keyword id="KW-0862">Zinc</keyword>
<keyword id="KW-0863">Zinc-finger</keyword>
<protein>
    <recommendedName>
        <fullName evidence="2">Acetyl-coenzyme A carboxylase carboxyl transferase subunit beta</fullName>
        <shortName evidence="2">ACCase subunit beta</shortName>
        <shortName evidence="2">Acetyl-CoA carboxylase carboxyltransferase subunit beta</shortName>
        <ecNumber evidence="2">2.1.3.15</ecNumber>
    </recommendedName>
</protein>
<organism>
    <name type="scientific">Cuscuta reflexa</name>
    <name type="common">Southern Asian dodder</name>
    <dbReference type="NCBI Taxonomy" id="4129"/>
    <lineage>
        <taxon>Eukaryota</taxon>
        <taxon>Viridiplantae</taxon>
        <taxon>Streptophyta</taxon>
        <taxon>Embryophyta</taxon>
        <taxon>Tracheophyta</taxon>
        <taxon>Spermatophyta</taxon>
        <taxon>Magnoliopsida</taxon>
        <taxon>eudicotyledons</taxon>
        <taxon>Gunneridae</taxon>
        <taxon>Pentapetalae</taxon>
        <taxon>asterids</taxon>
        <taxon>lamiids</taxon>
        <taxon>Solanales</taxon>
        <taxon>Convolvulaceae</taxon>
        <taxon>Cuscuteae</taxon>
        <taxon>Cuscuta</taxon>
        <taxon>Cuscuta subgen. Monogynella</taxon>
    </lineage>
</organism>
<reference key="1">
    <citation type="submission" date="1992-12" db="EMBL/GenBank/DDBJ databases">
        <authorList>
            <person name="Heberhausen G."/>
        </authorList>
    </citation>
    <scope>NUCLEOTIDE SEQUENCE [GENOMIC DNA]</scope>
</reference>
<reference key="2">
    <citation type="journal article" date="2007" name="BMC Plant Biol.">
        <title>Complete DNA sequences of the plastid genomes of two parasitic flowering plant species, Cuscuta reflexa and Cuscuta gronovii.</title>
        <authorList>
            <person name="Funk H.T."/>
            <person name="Berg S."/>
            <person name="Krupinska K."/>
            <person name="Maier U.-G."/>
            <person name="Krause K."/>
        </authorList>
    </citation>
    <scope>NUCLEOTIDE SEQUENCE [LARGE SCALE GENOMIC DNA]</scope>
    <scope>RNA EDITING</scope>
</reference>
<proteinExistence type="evidence at transcript level"/>
<comment type="function">
    <text evidence="2">Component of the acetyl coenzyme A carboxylase (ACC) complex. Biotin carboxylase (BC) catalyzes the carboxylation of biotin on its carrier protein (BCCP) and then the CO(2) group is transferred by the transcarboxylase to acetyl-CoA to form malonyl-CoA.</text>
</comment>
<comment type="catalytic activity">
    <reaction evidence="2">
        <text>N(6)-carboxybiotinyl-L-lysyl-[protein] + acetyl-CoA = N(6)-biotinyl-L-lysyl-[protein] + malonyl-CoA</text>
        <dbReference type="Rhea" id="RHEA:54728"/>
        <dbReference type="Rhea" id="RHEA-COMP:10505"/>
        <dbReference type="Rhea" id="RHEA-COMP:10506"/>
        <dbReference type="ChEBI" id="CHEBI:57288"/>
        <dbReference type="ChEBI" id="CHEBI:57384"/>
        <dbReference type="ChEBI" id="CHEBI:83144"/>
        <dbReference type="ChEBI" id="CHEBI:83145"/>
        <dbReference type="EC" id="2.1.3.15"/>
    </reaction>
</comment>
<comment type="cofactor">
    <cofactor evidence="2">
        <name>Zn(2+)</name>
        <dbReference type="ChEBI" id="CHEBI:29105"/>
    </cofactor>
    <text evidence="2">Binds 1 zinc ion per subunit.</text>
</comment>
<comment type="pathway">
    <text evidence="2">Lipid metabolism; malonyl-CoA biosynthesis; malonyl-CoA from acetyl-CoA: step 1/1.</text>
</comment>
<comment type="subunit">
    <text evidence="1">Acetyl-CoA carboxylase is a heterohexamer composed of biotin carboxyl carrier protein, biotin carboxylase and 2 subunits each of ACCase subunit alpha and ACCase plastid-coded subunit beta (accD).</text>
</comment>
<comment type="subcellular location">
    <subcellularLocation>
        <location>Plastid</location>
    </subcellularLocation>
</comment>
<comment type="RNA editing">
    <location>
        <position position="258" evidence="4"/>
    </location>
</comment>
<comment type="similarity">
    <text evidence="2">Belongs to the AccD/PCCB family.</text>
</comment>
<comment type="caution">
    <text evidence="5">Young tissue from this organism is photosynthetic and contains some thylakoids, although the photosynthetic activity does not exceed the light compensation point.</text>
</comment>
<geneLocation type="plastid"/>
<evidence type="ECO:0000250" key="1"/>
<evidence type="ECO:0000255" key="2">
    <source>
        <dbReference type="HAMAP-Rule" id="MF_01395"/>
    </source>
</evidence>
<evidence type="ECO:0000255" key="3">
    <source>
        <dbReference type="PROSITE-ProRule" id="PRU01136"/>
    </source>
</evidence>
<evidence type="ECO:0000269" key="4">
    <source>
    </source>
</evidence>
<evidence type="ECO:0000305" key="5"/>
<gene>
    <name evidence="2" type="primary">accD</name>
    <name type="synonym">ycf11</name>
    <name type="synonym">zfpA</name>
</gene>
<dbReference type="EC" id="2.1.3.15" evidence="2"/>
<dbReference type="EMBL" id="X69803">
    <property type="protein sequence ID" value="CAA49462.1"/>
    <property type="status" value="ALT_SEQ"/>
    <property type="molecule type" value="Genomic_DNA"/>
</dbReference>
<dbReference type="EMBL" id="AM711640">
    <property type="protein sequence ID" value="CAM98405.1"/>
    <property type="status" value="ALT_SEQ"/>
    <property type="molecule type" value="Genomic_DNA"/>
</dbReference>
<dbReference type="PIR" id="S31477">
    <property type="entry name" value="S31477"/>
</dbReference>
<dbReference type="RefSeq" id="YP_001430119.1">
    <property type="nucleotide sequence ID" value="NC_009766.1"/>
</dbReference>
<dbReference type="SMR" id="P31562"/>
<dbReference type="GeneID" id="5536593"/>
<dbReference type="UniPathway" id="UPA00655">
    <property type="reaction ID" value="UER00711"/>
</dbReference>
<dbReference type="GO" id="GO:0009317">
    <property type="term" value="C:acetyl-CoA carboxylase complex"/>
    <property type="evidence" value="ECO:0007669"/>
    <property type="project" value="InterPro"/>
</dbReference>
<dbReference type="GO" id="GO:0009536">
    <property type="term" value="C:plastid"/>
    <property type="evidence" value="ECO:0007669"/>
    <property type="project" value="UniProtKB-SubCell"/>
</dbReference>
<dbReference type="GO" id="GO:0003989">
    <property type="term" value="F:acetyl-CoA carboxylase activity"/>
    <property type="evidence" value="ECO:0007669"/>
    <property type="project" value="InterPro"/>
</dbReference>
<dbReference type="GO" id="GO:0005524">
    <property type="term" value="F:ATP binding"/>
    <property type="evidence" value="ECO:0007669"/>
    <property type="project" value="UniProtKB-KW"/>
</dbReference>
<dbReference type="GO" id="GO:0016743">
    <property type="term" value="F:carboxyl- or carbamoyltransferase activity"/>
    <property type="evidence" value="ECO:0007669"/>
    <property type="project" value="UniProtKB-UniRule"/>
</dbReference>
<dbReference type="GO" id="GO:0008270">
    <property type="term" value="F:zinc ion binding"/>
    <property type="evidence" value="ECO:0007669"/>
    <property type="project" value="UniProtKB-UniRule"/>
</dbReference>
<dbReference type="GO" id="GO:0006633">
    <property type="term" value="P:fatty acid biosynthetic process"/>
    <property type="evidence" value="ECO:0007669"/>
    <property type="project" value="UniProtKB-KW"/>
</dbReference>
<dbReference type="GO" id="GO:2001295">
    <property type="term" value="P:malonyl-CoA biosynthetic process"/>
    <property type="evidence" value="ECO:0007669"/>
    <property type="project" value="UniProtKB-UniRule"/>
</dbReference>
<dbReference type="Gene3D" id="3.90.226.10">
    <property type="entry name" value="2-enoyl-CoA Hydratase, Chain A, domain 1"/>
    <property type="match status" value="1"/>
</dbReference>
<dbReference type="HAMAP" id="MF_01395">
    <property type="entry name" value="AcetylCoA_CT_beta"/>
    <property type="match status" value="1"/>
</dbReference>
<dbReference type="InterPro" id="IPR034733">
    <property type="entry name" value="AcCoA_carboxyl_beta"/>
</dbReference>
<dbReference type="InterPro" id="IPR000438">
    <property type="entry name" value="Acetyl_CoA_COase_Trfase_b_su"/>
</dbReference>
<dbReference type="InterPro" id="IPR029045">
    <property type="entry name" value="ClpP/crotonase-like_dom_sf"/>
</dbReference>
<dbReference type="InterPro" id="IPR011762">
    <property type="entry name" value="COA_CT_N"/>
</dbReference>
<dbReference type="NCBIfam" id="TIGR00515">
    <property type="entry name" value="accD"/>
    <property type="match status" value="1"/>
</dbReference>
<dbReference type="PANTHER" id="PTHR42995">
    <property type="entry name" value="ACETYL-COENZYME A CARBOXYLASE CARBOXYL TRANSFERASE SUBUNIT BETA, CHLOROPLASTIC"/>
    <property type="match status" value="1"/>
</dbReference>
<dbReference type="PANTHER" id="PTHR42995:SF5">
    <property type="entry name" value="ACETYL-COENZYME A CARBOXYLASE CARBOXYL TRANSFERASE SUBUNIT BETA, CHLOROPLASTIC"/>
    <property type="match status" value="1"/>
</dbReference>
<dbReference type="Pfam" id="PF01039">
    <property type="entry name" value="Carboxyl_trans"/>
    <property type="match status" value="1"/>
</dbReference>
<dbReference type="PRINTS" id="PR01070">
    <property type="entry name" value="ACCCTRFRASEB"/>
</dbReference>
<dbReference type="SUPFAM" id="SSF52096">
    <property type="entry name" value="ClpP/crotonase"/>
    <property type="match status" value="1"/>
</dbReference>
<dbReference type="PROSITE" id="PS50980">
    <property type="entry name" value="COA_CT_NTER"/>
    <property type="match status" value="1"/>
</dbReference>
<name>ACCD_CUSRE</name>
<feature type="chain" id="PRO_0000199783" description="Acetyl-coenzyme A carboxylase carboxyl transferase subunit beta">
    <location>
        <begin position="1"/>
        <end position="497"/>
    </location>
</feature>
<feature type="domain" description="CoA carboxyltransferase N-terminal" evidence="3">
    <location>
        <begin position="217"/>
        <end position="489"/>
    </location>
</feature>
<feature type="zinc finger region" description="C4-type" evidence="2">
    <location>
        <begin position="221"/>
        <end position="243"/>
    </location>
</feature>
<feature type="binding site" evidence="2">
    <location>
        <position position="221"/>
    </location>
    <ligand>
        <name>Zn(2+)</name>
        <dbReference type="ChEBI" id="CHEBI:29105"/>
    </ligand>
</feature>
<feature type="binding site" evidence="2">
    <location>
        <position position="224"/>
    </location>
    <ligand>
        <name>Zn(2+)</name>
        <dbReference type="ChEBI" id="CHEBI:29105"/>
    </ligand>
</feature>
<feature type="binding site" evidence="2">
    <location>
        <position position="240"/>
    </location>
    <ligand>
        <name>Zn(2+)</name>
        <dbReference type="ChEBI" id="CHEBI:29105"/>
    </ligand>
</feature>
<feature type="binding site" evidence="2">
    <location>
        <position position="243"/>
    </location>
    <ligand>
        <name>Zn(2+)</name>
        <dbReference type="ChEBI" id="CHEBI:29105"/>
    </ligand>
</feature>